<geneLocation type="chloroplast"/>
<organism>
    <name type="scientific">Dioscorea elephantipes</name>
    <name type="common">Elephant's foot yam</name>
    <name type="synonym">Testudinaria elephantipes</name>
    <dbReference type="NCBI Taxonomy" id="145284"/>
    <lineage>
        <taxon>Eukaryota</taxon>
        <taxon>Viridiplantae</taxon>
        <taxon>Streptophyta</taxon>
        <taxon>Embryophyta</taxon>
        <taxon>Tracheophyta</taxon>
        <taxon>Spermatophyta</taxon>
        <taxon>Magnoliopsida</taxon>
        <taxon>Liliopsida</taxon>
        <taxon>Dioscoreales</taxon>
        <taxon>Dioscoreaceae</taxon>
        <taxon>Dioscorea</taxon>
    </lineage>
</organism>
<keyword id="KW-0150">Chloroplast</keyword>
<keyword id="KW-0472">Membrane</keyword>
<keyword id="KW-0520">NAD</keyword>
<keyword id="KW-0521">NADP</keyword>
<keyword id="KW-0934">Plastid</keyword>
<keyword id="KW-0618">Plastoquinone</keyword>
<keyword id="KW-0874">Quinone</keyword>
<keyword id="KW-0793">Thylakoid</keyword>
<keyword id="KW-1278">Translocase</keyword>
<keyword id="KW-0813">Transport</keyword>
<comment type="function">
    <text evidence="1">NDH shuttles electrons from NAD(P)H:plastoquinone, via FMN and iron-sulfur (Fe-S) centers, to quinones in the photosynthetic chain and possibly in a chloroplast respiratory chain. The immediate electron acceptor for the enzyme in this species is believed to be plastoquinone. Couples the redox reaction to proton translocation, and thus conserves the redox energy in a proton gradient.</text>
</comment>
<comment type="catalytic activity">
    <reaction evidence="1">
        <text>a plastoquinone + NADH + (n+1) H(+)(in) = a plastoquinol + NAD(+) + n H(+)(out)</text>
        <dbReference type="Rhea" id="RHEA:42608"/>
        <dbReference type="Rhea" id="RHEA-COMP:9561"/>
        <dbReference type="Rhea" id="RHEA-COMP:9562"/>
        <dbReference type="ChEBI" id="CHEBI:15378"/>
        <dbReference type="ChEBI" id="CHEBI:17757"/>
        <dbReference type="ChEBI" id="CHEBI:57540"/>
        <dbReference type="ChEBI" id="CHEBI:57945"/>
        <dbReference type="ChEBI" id="CHEBI:62192"/>
    </reaction>
</comment>
<comment type="catalytic activity">
    <reaction evidence="1">
        <text>a plastoquinone + NADPH + (n+1) H(+)(in) = a plastoquinol + NADP(+) + n H(+)(out)</text>
        <dbReference type="Rhea" id="RHEA:42612"/>
        <dbReference type="Rhea" id="RHEA-COMP:9561"/>
        <dbReference type="Rhea" id="RHEA-COMP:9562"/>
        <dbReference type="ChEBI" id="CHEBI:15378"/>
        <dbReference type="ChEBI" id="CHEBI:17757"/>
        <dbReference type="ChEBI" id="CHEBI:57783"/>
        <dbReference type="ChEBI" id="CHEBI:58349"/>
        <dbReference type="ChEBI" id="CHEBI:62192"/>
    </reaction>
</comment>
<comment type="subunit">
    <text evidence="1">NDH is composed of at least 16 different subunits, 5 of which are encoded in the nucleus.</text>
</comment>
<comment type="subcellular location">
    <subcellularLocation>
        <location evidence="1">Plastid</location>
        <location evidence="1">Chloroplast thylakoid membrane</location>
        <topology evidence="1">Peripheral membrane protein</topology>
        <orientation evidence="1">Stromal side</orientation>
    </subcellularLocation>
</comment>
<comment type="similarity">
    <text evidence="1">Belongs to the complex I 30 kDa subunit family.</text>
</comment>
<reference key="1">
    <citation type="journal article" date="2007" name="Mol. Phylogenet. Evol.">
        <title>Phylogenetic and evolutionary implications of complete chloroplast genome sequences of four early-diverging angiosperms: Buxus (Buxaceae), Chloranthus (Chloranthaceae), Dioscorea (Dioscoreaceae), and Illicium (Schisandraceae).</title>
        <authorList>
            <person name="Hansen D.R."/>
            <person name="Dastidar S.G."/>
            <person name="Cai Z."/>
            <person name="Penaflor C."/>
            <person name="Kuehl J.V."/>
            <person name="Boore J.L."/>
            <person name="Jansen R.K."/>
        </authorList>
    </citation>
    <scope>NUCLEOTIDE SEQUENCE [LARGE SCALE GENOMIC DNA]</scope>
</reference>
<name>NDHJ_DIOEL</name>
<gene>
    <name evidence="1" type="primary">ndhJ</name>
</gene>
<dbReference type="EC" id="7.1.1.-" evidence="1"/>
<dbReference type="EMBL" id="EF380353">
    <property type="protein sequence ID" value="ABR01433.1"/>
    <property type="molecule type" value="Genomic_DNA"/>
</dbReference>
<dbReference type="RefSeq" id="YP_001294355.1">
    <property type="nucleotide sequence ID" value="NC_009601.1"/>
</dbReference>
<dbReference type="SMR" id="A6MML0"/>
<dbReference type="GeneID" id="5236614"/>
<dbReference type="GO" id="GO:0009535">
    <property type="term" value="C:chloroplast thylakoid membrane"/>
    <property type="evidence" value="ECO:0007669"/>
    <property type="project" value="UniProtKB-SubCell"/>
</dbReference>
<dbReference type="GO" id="GO:0008137">
    <property type="term" value="F:NADH dehydrogenase (ubiquinone) activity"/>
    <property type="evidence" value="ECO:0007669"/>
    <property type="project" value="InterPro"/>
</dbReference>
<dbReference type="GO" id="GO:0048038">
    <property type="term" value="F:quinone binding"/>
    <property type="evidence" value="ECO:0007669"/>
    <property type="project" value="UniProtKB-KW"/>
</dbReference>
<dbReference type="GO" id="GO:0019684">
    <property type="term" value="P:photosynthesis, light reaction"/>
    <property type="evidence" value="ECO:0007669"/>
    <property type="project" value="UniProtKB-UniRule"/>
</dbReference>
<dbReference type="Gene3D" id="3.30.460.80">
    <property type="entry name" value="NADH:ubiquinone oxidoreductase, 30kDa subunit"/>
    <property type="match status" value="1"/>
</dbReference>
<dbReference type="HAMAP" id="MF_01357">
    <property type="entry name" value="NDH1_NuoC"/>
    <property type="match status" value="1"/>
</dbReference>
<dbReference type="InterPro" id="IPR010218">
    <property type="entry name" value="NADH_DH_suC"/>
</dbReference>
<dbReference type="InterPro" id="IPR037232">
    <property type="entry name" value="NADH_quin_OxRdtase_su_C/D-like"/>
</dbReference>
<dbReference type="InterPro" id="IPR001268">
    <property type="entry name" value="NADH_UbQ_OxRdtase_30kDa_su"/>
</dbReference>
<dbReference type="InterPro" id="IPR020396">
    <property type="entry name" value="NADH_UbQ_OxRdtase_CS"/>
</dbReference>
<dbReference type="NCBIfam" id="NF009141">
    <property type="entry name" value="PRK12494.1"/>
    <property type="match status" value="1"/>
</dbReference>
<dbReference type="PANTHER" id="PTHR10884:SF14">
    <property type="entry name" value="NADH DEHYDROGENASE [UBIQUINONE] IRON-SULFUR PROTEIN 3, MITOCHONDRIAL"/>
    <property type="match status" value="1"/>
</dbReference>
<dbReference type="PANTHER" id="PTHR10884">
    <property type="entry name" value="NADH DEHYDROGENASE UBIQUINONE IRON-SULFUR PROTEIN 3"/>
    <property type="match status" value="1"/>
</dbReference>
<dbReference type="Pfam" id="PF00329">
    <property type="entry name" value="Complex1_30kDa"/>
    <property type="match status" value="1"/>
</dbReference>
<dbReference type="SUPFAM" id="SSF143243">
    <property type="entry name" value="Nqo5-like"/>
    <property type="match status" value="1"/>
</dbReference>
<dbReference type="PROSITE" id="PS00542">
    <property type="entry name" value="COMPLEX1_30K"/>
    <property type="match status" value="1"/>
</dbReference>
<sequence>MQSRLSDWLVKHELVHRSLGFDYQGIETLQIKTEDWDSIAVISYIYGYNYLRSQCAYDVAPGGFLASVYHLTRIQYGIDKVEEVCLKVFVSRNNPRIPSVFWIWKSADFQERESYDMLGISYANHPHLKRILMPESWIGWPLRKDYITPNFYEIQDAR</sequence>
<feature type="chain" id="PRO_0000358262" description="NAD(P)H-quinone oxidoreductase subunit J, chloroplastic">
    <location>
        <begin position="1"/>
        <end position="158"/>
    </location>
</feature>
<accession>A6MML0</accession>
<proteinExistence type="inferred from homology"/>
<protein>
    <recommendedName>
        <fullName evidence="1">NAD(P)H-quinone oxidoreductase subunit J, chloroplastic</fullName>
        <ecNumber evidence="1">7.1.1.-</ecNumber>
    </recommendedName>
    <alternativeName>
        <fullName>NAD(P)H dehydrogenase subunit J</fullName>
    </alternativeName>
    <alternativeName>
        <fullName evidence="1">NADH-plastoquinone oxidoreductase subunit J</fullName>
    </alternativeName>
</protein>
<evidence type="ECO:0000255" key="1">
    <source>
        <dbReference type="HAMAP-Rule" id="MF_01357"/>
    </source>
</evidence>